<feature type="chain" id="PRO_0000048722" description="Transcription factor SOX-3">
    <location>
        <begin position="1"/>
        <end position="312"/>
    </location>
</feature>
<feature type="DNA-binding region" description="HMG box" evidence="2">
    <location>
        <begin position="46"/>
        <end position="114"/>
    </location>
</feature>
<feature type="region of interest" description="Disordered" evidence="3">
    <location>
        <begin position="1"/>
        <end position="23"/>
    </location>
</feature>
<feature type="region of interest" description="Disordered" evidence="3">
    <location>
        <begin position="229"/>
        <end position="254"/>
    </location>
</feature>
<feature type="short sequence motif" description="9aaTAD" evidence="1">
    <location>
        <begin position="263"/>
        <end position="274"/>
    </location>
</feature>
<dbReference type="EMBL" id="U12467">
    <property type="protein sequence ID" value="AAA76598.1"/>
    <property type="molecule type" value="mRNA"/>
</dbReference>
<dbReference type="PIR" id="I50705">
    <property type="entry name" value="I50705"/>
</dbReference>
<dbReference type="SMR" id="P48433"/>
<dbReference type="FunCoup" id="P48433">
    <property type="interactions" value="20"/>
</dbReference>
<dbReference type="VEuPathDB" id="HostDB:geneid_374019"/>
<dbReference type="InParanoid" id="P48433"/>
<dbReference type="OrthoDB" id="6247875at2759"/>
<dbReference type="PhylomeDB" id="P48433"/>
<dbReference type="Proteomes" id="UP000000539">
    <property type="component" value="Unassembled WGS sequence"/>
</dbReference>
<dbReference type="GO" id="GO:0005634">
    <property type="term" value="C:nucleus"/>
    <property type="evidence" value="ECO:0000318"/>
    <property type="project" value="GO_Central"/>
</dbReference>
<dbReference type="GO" id="GO:0001228">
    <property type="term" value="F:DNA-binding transcription activator activity, RNA polymerase II-specific"/>
    <property type="evidence" value="ECO:0000318"/>
    <property type="project" value="GO_Central"/>
</dbReference>
<dbReference type="GO" id="GO:0000978">
    <property type="term" value="F:RNA polymerase II cis-regulatory region sequence-specific DNA binding"/>
    <property type="evidence" value="ECO:0000250"/>
    <property type="project" value="UniProtKB"/>
</dbReference>
<dbReference type="GO" id="GO:0007420">
    <property type="term" value="P:brain development"/>
    <property type="evidence" value="ECO:0000318"/>
    <property type="project" value="GO_Central"/>
</dbReference>
<dbReference type="GO" id="GO:0060324">
    <property type="term" value="P:face development"/>
    <property type="evidence" value="ECO:0000250"/>
    <property type="project" value="UniProtKB"/>
</dbReference>
<dbReference type="GO" id="GO:0021854">
    <property type="term" value="P:hypothalamus development"/>
    <property type="evidence" value="ECO:0000250"/>
    <property type="project" value="UniProtKB"/>
</dbReference>
<dbReference type="GO" id="GO:0045665">
    <property type="term" value="P:negative regulation of neuron differentiation"/>
    <property type="evidence" value="ECO:0000315"/>
    <property type="project" value="UniProtKB"/>
</dbReference>
<dbReference type="GO" id="GO:0000122">
    <property type="term" value="P:negative regulation of transcription by RNA polymerase II"/>
    <property type="evidence" value="ECO:0000318"/>
    <property type="project" value="GO_Central"/>
</dbReference>
<dbReference type="GO" id="GO:0030182">
    <property type="term" value="P:neuron differentiation"/>
    <property type="evidence" value="ECO:0000318"/>
    <property type="project" value="GO_Central"/>
</dbReference>
<dbReference type="GO" id="GO:0021983">
    <property type="term" value="P:pituitary gland development"/>
    <property type="evidence" value="ECO:0000250"/>
    <property type="project" value="UniProtKB"/>
</dbReference>
<dbReference type="GO" id="GO:0045944">
    <property type="term" value="P:positive regulation of transcription by RNA polymerase II"/>
    <property type="evidence" value="ECO:0000318"/>
    <property type="project" value="GO_Central"/>
</dbReference>
<dbReference type="GO" id="GO:0007423">
    <property type="term" value="P:sensory organ development"/>
    <property type="evidence" value="ECO:0000250"/>
    <property type="project" value="UniProtKB"/>
</dbReference>
<dbReference type="CDD" id="cd01388">
    <property type="entry name" value="HMG-box_SoxB"/>
    <property type="match status" value="1"/>
</dbReference>
<dbReference type="FunFam" id="1.10.30.10:FF:000002">
    <property type="entry name" value="transcription factor Sox-2"/>
    <property type="match status" value="1"/>
</dbReference>
<dbReference type="Gene3D" id="1.10.30.10">
    <property type="entry name" value="High mobility group box domain"/>
    <property type="match status" value="1"/>
</dbReference>
<dbReference type="InterPro" id="IPR009071">
    <property type="entry name" value="HMG_box_dom"/>
</dbReference>
<dbReference type="InterPro" id="IPR036910">
    <property type="entry name" value="HMG_box_dom_sf"/>
</dbReference>
<dbReference type="InterPro" id="IPR022097">
    <property type="entry name" value="SOX_fam"/>
</dbReference>
<dbReference type="InterPro" id="IPR050140">
    <property type="entry name" value="SRY-related_HMG-box_TF-like"/>
</dbReference>
<dbReference type="PANTHER" id="PTHR10270">
    <property type="entry name" value="SOX TRANSCRIPTION FACTOR"/>
    <property type="match status" value="1"/>
</dbReference>
<dbReference type="PANTHER" id="PTHR10270:SF329">
    <property type="entry name" value="TRANSCRIPTION FACTOR SOX-3"/>
    <property type="match status" value="1"/>
</dbReference>
<dbReference type="Pfam" id="PF00505">
    <property type="entry name" value="HMG_box"/>
    <property type="match status" value="1"/>
</dbReference>
<dbReference type="Pfam" id="PF12336">
    <property type="entry name" value="SOXp"/>
    <property type="match status" value="1"/>
</dbReference>
<dbReference type="SMART" id="SM00398">
    <property type="entry name" value="HMG"/>
    <property type="match status" value="1"/>
</dbReference>
<dbReference type="SUPFAM" id="SSF47095">
    <property type="entry name" value="HMG-box"/>
    <property type="match status" value="1"/>
</dbReference>
<dbReference type="PROSITE" id="PS50118">
    <property type="entry name" value="HMG_BOX_2"/>
    <property type="match status" value="1"/>
</dbReference>
<evidence type="ECO:0000250" key="1">
    <source>
        <dbReference type="UniProtKB" id="P41225"/>
    </source>
</evidence>
<evidence type="ECO:0000255" key="2">
    <source>
        <dbReference type="PROSITE-ProRule" id="PRU00267"/>
    </source>
</evidence>
<evidence type="ECO:0000256" key="3">
    <source>
        <dbReference type="SAM" id="MobiDB-lite"/>
    </source>
</evidence>
<evidence type="ECO:0000269" key="4">
    <source>
    </source>
</evidence>
<evidence type="ECO:0000269" key="5">
    <source>
    </source>
</evidence>
<evidence type="ECO:0000305" key="6"/>
<sequence>MYSMLETEIKTPQPTRAARGEPARAATAKVGGAAAADGCRSDQDRVKRPMNAFMVWSRGQRRKMAQENPKMHNSEISKRLGADWKLLSDAEKRPFIDEAKRLRAVHMKEYPDYKYRPRRKTKTLLKKDKYSLPGNLWPPGSAGAAAVGVGQRIDTYAHMNGWTNGAYSLMQDQLGYGQHPGMNSPQLQQMHRYDMPGLQYSPMMSTAQTYMNAGLHLQHVPRPYGQQPSTAMSLGSMGSVVKSEPSSAPPAITSHSQRACLGELRDMISMYLGPGGDATHPSALQGSRLHSVHQHYQSAGTRVNGTVPLTHI</sequence>
<gene>
    <name type="primary">SOX3</name>
</gene>
<accession>P48433</accession>
<reference key="1">
    <citation type="journal article" date="1995" name="Mech. Dev.">
        <title>Embryonic expression of the chicken Sox2, Sox3 and Sox11 genes suggests an interactive role in neuronal development.</title>
        <authorList>
            <person name="Uwanogho D."/>
            <person name="Rex M."/>
            <person name="Cartwright E.J."/>
            <person name="Pearl G."/>
            <person name="Healy C."/>
            <person name="Scotting P.J."/>
            <person name="Sharpe P.T."/>
        </authorList>
    </citation>
    <scope>NUCLEOTIDE SEQUENCE [MRNA]</scope>
    <scope>PUTATIVE FUNCTION</scope>
    <scope>TISSUE SPECIFICITY</scope>
    <scope>DEVELOPMENTAL STAGE</scope>
    <source>
        <tissue>Embryo</tissue>
    </source>
</reference>
<reference key="2">
    <citation type="journal article" date="2003" name="Nat. Neurosci.">
        <title>Vertebrate neurogenesis is counteracted by Sox1-3 activity.</title>
        <authorList>
            <person name="Bylund M."/>
            <person name="Andersson E."/>
            <person name="Novitch B.G."/>
            <person name="Muhr J."/>
        </authorList>
    </citation>
    <scope>FUNCTION</scope>
</reference>
<name>SOX3_CHICK</name>
<proteinExistence type="evidence at transcript level"/>
<keyword id="KW-0217">Developmental protein</keyword>
<keyword id="KW-0238">DNA-binding</keyword>
<keyword id="KW-0539">Nucleus</keyword>
<keyword id="KW-1185">Reference proteome</keyword>
<keyword id="KW-0804">Transcription</keyword>
<keyword id="KW-0805">Transcription regulation</keyword>
<comment type="function">
    <text evidence="4">Transcription factor that may function as a switch in neuronal development. Keeps neural cells undifferentiated by counteracting the activity of proneural proteins and suppresses neuronal differentiation.</text>
</comment>
<comment type="subcellular location">
    <subcellularLocation>
        <location>Nucleus</location>
    </subcellularLocation>
</comment>
<comment type="tissue specificity">
    <text evidence="5">First expressed in the embryonic neural plate shortly before closure and expression continues in the neural tube. From stage 16 onwards, expressed throughout the CNS including the brain, with expression predominant in the undifferentiated cells of the neural epithelium. Also expressed at a low level in the retina and the gut epithelium.</text>
</comment>
<comment type="developmental stage">
    <text evidence="5">Expression is maximal at stages 24-31, then begins to decline. Expression is absent by stage 37. Does not appear to be expressed in adults.</text>
</comment>
<comment type="domain">
    <text evidence="1">The 9aaTAD motif is a transactivation domain present in a large number of yeast and animal transcription factors.</text>
</comment>
<comment type="caution">
    <text evidence="6">It is uncertain whether Met-1 or Met-4 is the initiator.</text>
</comment>
<organism>
    <name type="scientific">Gallus gallus</name>
    <name type="common">Chicken</name>
    <dbReference type="NCBI Taxonomy" id="9031"/>
    <lineage>
        <taxon>Eukaryota</taxon>
        <taxon>Metazoa</taxon>
        <taxon>Chordata</taxon>
        <taxon>Craniata</taxon>
        <taxon>Vertebrata</taxon>
        <taxon>Euteleostomi</taxon>
        <taxon>Archelosauria</taxon>
        <taxon>Archosauria</taxon>
        <taxon>Dinosauria</taxon>
        <taxon>Saurischia</taxon>
        <taxon>Theropoda</taxon>
        <taxon>Coelurosauria</taxon>
        <taxon>Aves</taxon>
        <taxon>Neognathae</taxon>
        <taxon>Galloanserae</taxon>
        <taxon>Galliformes</taxon>
        <taxon>Phasianidae</taxon>
        <taxon>Phasianinae</taxon>
        <taxon>Gallus</taxon>
    </lineage>
</organism>
<protein>
    <recommendedName>
        <fullName>Transcription factor SOX-3</fullName>
        <shortName>cSox3</shortName>
    </recommendedName>
</protein>